<proteinExistence type="inferred from homology"/>
<name>NUSB_BAUCH</name>
<keyword id="KW-1185">Reference proteome</keyword>
<keyword id="KW-0694">RNA-binding</keyword>
<keyword id="KW-0804">Transcription</keyword>
<keyword id="KW-0889">Transcription antitermination</keyword>
<keyword id="KW-0805">Transcription regulation</keyword>
<gene>
    <name evidence="1" type="primary">nusB</name>
    <name type="ordered locus">BCI_0603</name>
</gene>
<dbReference type="EMBL" id="CP000238">
    <property type="protein sequence ID" value="ABF14060.1"/>
    <property type="molecule type" value="Genomic_DNA"/>
</dbReference>
<dbReference type="RefSeq" id="WP_011520763.1">
    <property type="nucleotide sequence ID" value="NC_007984.1"/>
</dbReference>
<dbReference type="SMR" id="Q1LSN4"/>
<dbReference type="STRING" id="374463.BCI_0603"/>
<dbReference type="KEGG" id="bci:BCI_0603"/>
<dbReference type="HOGENOM" id="CLU_087843_4_1_6"/>
<dbReference type="OrthoDB" id="9789556at2"/>
<dbReference type="Proteomes" id="UP000002427">
    <property type="component" value="Chromosome"/>
</dbReference>
<dbReference type="GO" id="GO:0005829">
    <property type="term" value="C:cytosol"/>
    <property type="evidence" value="ECO:0007669"/>
    <property type="project" value="TreeGrafter"/>
</dbReference>
<dbReference type="GO" id="GO:0003723">
    <property type="term" value="F:RNA binding"/>
    <property type="evidence" value="ECO:0007669"/>
    <property type="project" value="UniProtKB-UniRule"/>
</dbReference>
<dbReference type="GO" id="GO:0006353">
    <property type="term" value="P:DNA-templated transcription termination"/>
    <property type="evidence" value="ECO:0007669"/>
    <property type="project" value="UniProtKB-UniRule"/>
</dbReference>
<dbReference type="GO" id="GO:0031564">
    <property type="term" value="P:transcription antitermination"/>
    <property type="evidence" value="ECO:0007669"/>
    <property type="project" value="UniProtKB-KW"/>
</dbReference>
<dbReference type="CDD" id="cd00619">
    <property type="entry name" value="Terminator_NusB"/>
    <property type="match status" value="1"/>
</dbReference>
<dbReference type="FunFam" id="1.10.940.10:FF:000001">
    <property type="entry name" value="Transcription antitermination factor NusB"/>
    <property type="match status" value="1"/>
</dbReference>
<dbReference type="Gene3D" id="1.10.940.10">
    <property type="entry name" value="NusB-like"/>
    <property type="match status" value="1"/>
</dbReference>
<dbReference type="HAMAP" id="MF_00073">
    <property type="entry name" value="NusB"/>
    <property type="match status" value="1"/>
</dbReference>
<dbReference type="InterPro" id="IPR035926">
    <property type="entry name" value="NusB-like_sf"/>
</dbReference>
<dbReference type="InterPro" id="IPR011605">
    <property type="entry name" value="NusB_fam"/>
</dbReference>
<dbReference type="InterPro" id="IPR006027">
    <property type="entry name" value="NusB_RsmB_TIM44"/>
</dbReference>
<dbReference type="NCBIfam" id="TIGR01951">
    <property type="entry name" value="nusB"/>
    <property type="match status" value="1"/>
</dbReference>
<dbReference type="PANTHER" id="PTHR11078:SF3">
    <property type="entry name" value="ANTITERMINATION NUSB DOMAIN-CONTAINING PROTEIN"/>
    <property type="match status" value="1"/>
</dbReference>
<dbReference type="PANTHER" id="PTHR11078">
    <property type="entry name" value="N UTILIZATION SUBSTANCE PROTEIN B-RELATED"/>
    <property type="match status" value="1"/>
</dbReference>
<dbReference type="Pfam" id="PF01029">
    <property type="entry name" value="NusB"/>
    <property type="match status" value="1"/>
</dbReference>
<dbReference type="SUPFAM" id="SSF48013">
    <property type="entry name" value="NusB-like"/>
    <property type="match status" value="1"/>
</dbReference>
<protein>
    <recommendedName>
        <fullName evidence="1">Transcription antitermination protein NusB</fullName>
    </recommendedName>
    <alternativeName>
        <fullName evidence="1">Antitermination factor NusB</fullName>
    </alternativeName>
</protein>
<organism>
    <name type="scientific">Baumannia cicadellinicola subsp. Homalodisca coagulata</name>
    <dbReference type="NCBI Taxonomy" id="374463"/>
    <lineage>
        <taxon>Bacteria</taxon>
        <taxon>Pseudomonadati</taxon>
        <taxon>Pseudomonadota</taxon>
        <taxon>Gammaproteobacteria</taxon>
        <taxon>Candidatus Palibaumannia</taxon>
    </lineage>
</organism>
<accession>Q1LSN4</accession>
<evidence type="ECO:0000255" key="1">
    <source>
        <dbReference type="HAMAP-Rule" id="MF_00073"/>
    </source>
</evidence>
<comment type="function">
    <text evidence="1">Involved in transcription antitermination. Required for transcription of ribosomal RNA (rRNA) genes. Binds specifically to the boxA antiterminator sequence of the ribosomal RNA (rrn) operons.</text>
</comment>
<comment type="similarity">
    <text evidence="1">Belongs to the NusB family.</text>
</comment>
<reference key="1">
    <citation type="journal article" date="2006" name="PLoS Biol.">
        <title>Metabolic complementarity and genomics of the dual bacterial symbiosis of sharpshooters.</title>
        <authorList>
            <person name="Wu D."/>
            <person name="Daugherty S.C."/>
            <person name="Van Aken S.E."/>
            <person name="Pai G.H."/>
            <person name="Watkins K.L."/>
            <person name="Khouri H."/>
            <person name="Tallon L.J."/>
            <person name="Zaborsky J.M."/>
            <person name="Dunbar H.E."/>
            <person name="Tran P.L."/>
            <person name="Moran N.A."/>
            <person name="Eisen J.A."/>
        </authorList>
    </citation>
    <scope>NUCLEOTIDE SEQUENCE [LARGE SCALE GENOMIC DNA]</scope>
</reference>
<feature type="chain" id="PRO_0000265488" description="Transcription antitermination protein NusB">
    <location>
        <begin position="1"/>
        <end position="139"/>
    </location>
</feature>
<sequence>MKITARRRARECAVQALYSWQLSNNNIADIEAQFLAEQDIKGIDVAYFRELYSGTAIAADMLDQLMVPYLSRPLDKLGHVERAVLRLALYELSKRQDIPYRVAINEAIELAKTFGAEDSYKFINGVLEKTASQIRPHRK</sequence>